<gene>
    <name type="primary">Rnf112</name>
    <name type="synonym">Bfp</name>
    <name type="synonym">Zfp179</name>
    <name type="synonym">Znf179</name>
</gene>
<accession>O70418</accession>
<keyword id="KW-0966">Cell projection</keyword>
<keyword id="KW-0963">Cytoplasm</keyword>
<keyword id="KW-0968">Cytoplasmic vesicle</keyword>
<keyword id="KW-0967">Endosome</keyword>
<keyword id="KW-0342">GTP-binding</keyword>
<keyword id="KW-0472">Membrane</keyword>
<keyword id="KW-0479">Metal-binding</keyword>
<keyword id="KW-0524">Neurogenesis</keyword>
<keyword id="KW-0547">Nucleotide-binding</keyword>
<keyword id="KW-0539">Nucleus</keyword>
<keyword id="KW-1185">Reference proteome</keyword>
<keyword id="KW-0770">Synapse</keyword>
<keyword id="KW-0808">Transferase</keyword>
<keyword id="KW-0812">Transmembrane</keyword>
<keyword id="KW-1133">Transmembrane helix</keyword>
<keyword id="KW-0832">Ubl conjugation</keyword>
<keyword id="KW-0833">Ubl conjugation pathway</keyword>
<keyword id="KW-0862">Zinc</keyword>
<keyword id="KW-0863">Zinc-finger</keyword>
<name>RN112_RAT</name>
<protein>
    <recommendedName>
        <fullName>RING finger protein 112</fullName>
        <ecNumber evidence="5">2.3.2.27</ecNumber>
    </recommendedName>
    <alternativeName>
        <fullName>Brain finger protein</fullName>
    </alternativeName>
    <alternativeName>
        <fullName>Zinc finger protein 179</fullName>
    </alternativeName>
</protein>
<evidence type="ECO:0000250" key="1">
    <source>
        <dbReference type="UniProtKB" id="Q96DY5"/>
    </source>
</evidence>
<evidence type="ECO:0000255" key="2"/>
<evidence type="ECO:0000255" key="3">
    <source>
        <dbReference type="PROSITE-ProRule" id="PRU00175"/>
    </source>
</evidence>
<evidence type="ECO:0000255" key="4">
    <source>
        <dbReference type="PROSITE-ProRule" id="PRU01052"/>
    </source>
</evidence>
<evidence type="ECO:0000305" key="5"/>
<reference key="1">
    <citation type="journal article" date="1997" name="Biochem. Biophys. Res. Commun.">
        <title>A novel RING finger protein, BFP, predominantly expressed in the brain.</title>
        <authorList>
            <person name="Inoue S."/>
            <person name="Orimo A."/>
            <person name="Saito T."/>
            <person name="Ikeda K."/>
            <person name="Sakata K."/>
            <person name="Hosoi T."/>
            <person name="Orimo H."/>
            <person name="Ouchi Y."/>
            <person name="Muramatsu M."/>
        </authorList>
    </citation>
    <scope>NUCLEOTIDE SEQUENCE [MRNA]</scope>
</reference>
<sequence>MPRPVLSVTAFCHRLGKRESKRSFMGNSSNSWSHASFPKLELGLGQRPSPPRESPTCSICLERLREPISLDCGHDFCIRCFSTHRIPGCELPCCPECRKICKQKKGLRSLGERMKLLPQRPLPPALQETCAVRAERLLLVRINASGGLILRMGAINRCLKHPLARDTPVCLLAVLGEQHSGKSFLLDHLLRGLPGLESGDSTRPRAEGSLPGIRWGANGLTRGIWMWSHPFLLGKEGKKVAVFLVDTGDVMSPELSRETRVKLCALTMMLSSYQILNTSQELKDTDLGYLEMFVHVAEVMGKHYGMVPIQHLDLLVRDSSHHNKSGQGHVGDILQKLSGKYPKVQELLLGKRARCYLLPAPERQWVNKGQASPGGNTEDDFSHHFRAYISDVLSTAPQHAKSRCQGYWSEGRAMARGDRRLLTGQQLAQEIKNLSGWMGKSGPSFSSPDEMAAQLHDLRKVEAAKKEFEEYVRQQDIATKRIFSALRVLPDTMRNLLSTQKDAILARHGVALLCKEREQTLEALEAELQAEAKAFMDSYTMRFCGHLAAVGGAVGAGLMGLAGGVVGAGMAAAALAAEAGMVAAGAAVGATGAAVVGGGVGAGLAATVGCMEKEEDERVQGGDREPLLQEE</sequence>
<organism>
    <name type="scientific">Rattus norvegicus</name>
    <name type="common">Rat</name>
    <dbReference type="NCBI Taxonomy" id="10116"/>
    <lineage>
        <taxon>Eukaryota</taxon>
        <taxon>Metazoa</taxon>
        <taxon>Chordata</taxon>
        <taxon>Craniata</taxon>
        <taxon>Vertebrata</taxon>
        <taxon>Euteleostomi</taxon>
        <taxon>Mammalia</taxon>
        <taxon>Eutheria</taxon>
        <taxon>Euarchontoglires</taxon>
        <taxon>Glires</taxon>
        <taxon>Rodentia</taxon>
        <taxon>Myomorpha</taxon>
        <taxon>Muroidea</taxon>
        <taxon>Muridae</taxon>
        <taxon>Murinae</taxon>
        <taxon>Rattus</taxon>
    </lineage>
</organism>
<proteinExistence type="evidence at transcript level"/>
<dbReference type="EC" id="2.3.2.27" evidence="5"/>
<dbReference type="EMBL" id="AF054586">
    <property type="protein sequence ID" value="AAC08583.1"/>
    <property type="molecule type" value="mRNA"/>
</dbReference>
<dbReference type="PIR" id="JC5803">
    <property type="entry name" value="JC5803"/>
</dbReference>
<dbReference type="RefSeq" id="NP_619516.1">
    <property type="nucleotide sequence ID" value="NM_138613.3"/>
</dbReference>
<dbReference type="SMR" id="O70418"/>
<dbReference type="FunCoup" id="O70418">
    <property type="interactions" value="334"/>
</dbReference>
<dbReference type="STRING" id="10116.ENSRNOP00000003228"/>
<dbReference type="PhosphoSitePlus" id="O70418"/>
<dbReference type="PaxDb" id="10116-ENSRNOP00000003228"/>
<dbReference type="GeneID" id="24916"/>
<dbReference type="KEGG" id="rno:24916"/>
<dbReference type="UCSC" id="RGD:3986">
    <property type="organism name" value="rat"/>
</dbReference>
<dbReference type="AGR" id="RGD:3986"/>
<dbReference type="CTD" id="7732"/>
<dbReference type="RGD" id="3986">
    <property type="gene designation" value="Rnf112"/>
</dbReference>
<dbReference type="eggNOG" id="KOG2037">
    <property type="taxonomic scope" value="Eukaryota"/>
</dbReference>
<dbReference type="eggNOG" id="KOG2177">
    <property type="taxonomic scope" value="Eukaryota"/>
</dbReference>
<dbReference type="InParanoid" id="O70418"/>
<dbReference type="OrthoDB" id="74044at9989"/>
<dbReference type="PhylomeDB" id="O70418"/>
<dbReference type="UniPathway" id="UPA00143"/>
<dbReference type="PRO" id="PR:O70418"/>
<dbReference type="Proteomes" id="UP000002494">
    <property type="component" value="Chromosome 10"/>
</dbReference>
<dbReference type="Bgee" id="ENSRNOG00000002364">
    <property type="expression patterns" value="Expressed in frontal cortex and 13 other cell types or tissues"/>
</dbReference>
<dbReference type="ExpressionAtlas" id="O70418">
    <property type="expression patterns" value="baseline and differential"/>
</dbReference>
<dbReference type="GO" id="GO:0044297">
    <property type="term" value="C:cell body"/>
    <property type="evidence" value="ECO:0000250"/>
    <property type="project" value="UniProtKB"/>
</dbReference>
<dbReference type="GO" id="GO:0005737">
    <property type="term" value="C:cytoplasm"/>
    <property type="evidence" value="ECO:0000250"/>
    <property type="project" value="UniProtKB"/>
</dbReference>
<dbReference type="GO" id="GO:0005768">
    <property type="term" value="C:endosome"/>
    <property type="evidence" value="ECO:0000250"/>
    <property type="project" value="UniProtKB"/>
</dbReference>
<dbReference type="GO" id="GO:0016020">
    <property type="term" value="C:membrane"/>
    <property type="evidence" value="ECO:0007669"/>
    <property type="project" value="UniProtKB-SubCell"/>
</dbReference>
<dbReference type="GO" id="GO:0043005">
    <property type="term" value="C:neuron projection"/>
    <property type="evidence" value="ECO:0007669"/>
    <property type="project" value="UniProtKB-SubCell"/>
</dbReference>
<dbReference type="GO" id="GO:0016604">
    <property type="term" value="C:nuclear body"/>
    <property type="evidence" value="ECO:0000250"/>
    <property type="project" value="UniProtKB"/>
</dbReference>
<dbReference type="GO" id="GO:0005654">
    <property type="term" value="C:nucleoplasm"/>
    <property type="evidence" value="ECO:0000250"/>
    <property type="project" value="UniProtKB"/>
</dbReference>
<dbReference type="GO" id="GO:0005634">
    <property type="term" value="C:nucleus"/>
    <property type="evidence" value="ECO:0000250"/>
    <property type="project" value="UniProtKB"/>
</dbReference>
<dbReference type="GO" id="GO:0043204">
    <property type="term" value="C:perikaryon"/>
    <property type="evidence" value="ECO:0007669"/>
    <property type="project" value="UniProtKB-SubCell"/>
</dbReference>
<dbReference type="GO" id="GO:0014069">
    <property type="term" value="C:postsynaptic density"/>
    <property type="evidence" value="ECO:0000250"/>
    <property type="project" value="UniProtKB"/>
</dbReference>
<dbReference type="GO" id="GO:0008021">
    <property type="term" value="C:synaptic vesicle"/>
    <property type="evidence" value="ECO:0000250"/>
    <property type="project" value="UniProtKB"/>
</dbReference>
<dbReference type="GO" id="GO:0005525">
    <property type="term" value="F:GTP binding"/>
    <property type="evidence" value="ECO:0000250"/>
    <property type="project" value="UniProtKB"/>
</dbReference>
<dbReference type="GO" id="GO:0003924">
    <property type="term" value="F:GTPase activity"/>
    <property type="evidence" value="ECO:0000250"/>
    <property type="project" value="UniProtKB"/>
</dbReference>
<dbReference type="GO" id="GO:0061630">
    <property type="term" value="F:ubiquitin protein ligase activity"/>
    <property type="evidence" value="ECO:0000250"/>
    <property type="project" value="UniProtKB"/>
</dbReference>
<dbReference type="GO" id="GO:0008270">
    <property type="term" value="F:zinc ion binding"/>
    <property type="evidence" value="ECO:0000303"/>
    <property type="project" value="RGD"/>
</dbReference>
<dbReference type="GO" id="GO:1990403">
    <property type="term" value="P:embryonic brain development"/>
    <property type="evidence" value="ECO:0000250"/>
    <property type="project" value="UniProtKB"/>
</dbReference>
<dbReference type="GO" id="GO:0007029">
    <property type="term" value="P:endoplasmic reticulum organization"/>
    <property type="evidence" value="ECO:0000318"/>
    <property type="project" value="GO_Central"/>
</dbReference>
<dbReference type="GO" id="GO:0070315">
    <property type="term" value="P:G1 to G0 transition involved in cell differentiation"/>
    <property type="evidence" value="ECO:0000266"/>
    <property type="project" value="RGD"/>
</dbReference>
<dbReference type="GO" id="GO:0030182">
    <property type="term" value="P:neuron differentiation"/>
    <property type="evidence" value="ECO:0000250"/>
    <property type="project" value="UniProtKB"/>
</dbReference>
<dbReference type="GO" id="GO:0045687">
    <property type="term" value="P:positive regulation of glial cell differentiation"/>
    <property type="evidence" value="ECO:0000266"/>
    <property type="project" value="RGD"/>
</dbReference>
<dbReference type="GO" id="GO:0045666">
    <property type="term" value="P:positive regulation of neuron differentiation"/>
    <property type="evidence" value="ECO:0000266"/>
    <property type="project" value="RGD"/>
</dbReference>
<dbReference type="GO" id="GO:0051865">
    <property type="term" value="P:protein autoubiquitination"/>
    <property type="evidence" value="ECO:0000250"/>
    <property type="project" value="UniProtKB"/>
</dbReference>
<dbReference type="GO" id="GO:0051260">
    <property type="term" value="P:protein homooligomerization"/>
    <property type="evidence" value="ECO:0000318"/>
    <property type="project" value="GO_Central"/>
</dbReference>
<dbReference type="GO" id="GO:0051726">
    <property type="term" value="P:regulation of cell cycle"/>
    <property type="evidence" value="ECO:0000250"/>
    <property type="project" value="UniProtKB"/>
</dbReference>
<dbReference type="GO" id="GO:0033194">
    <property type="term" value="P:response to hydroperoxide"/>
    <property type="evidence" value="ECO:0000250"/>
    <property type="project" value="UniProtKB"/>
</dbReference>
<dbReference type="CDD" id="cd01851">
    <property type="entry name" value="GBP"/>
    <property type="match status" value="1"/>
</dbReference>
<dbReference type="CDD" id="cd16538">
    <property type="entry name" value="RING-HC_RNF112"/>
    <property type="match status" value="1"/>
</dbReference>
<dbReference type="FunFam" id="3.30.40.10:FF:000305">
    <property type="entry name" value="RING finger protein 112"/>
    <property type="match status" value="1"/>
</dbReference>
<dbReference type="FunFam" id="3.40.50.300:FF:001009">
    <property type="entry name" value="RING finger protein 112"/>
    <property type="match status" value="1"/>
</dbReference>
<dbReference type="Gene3D" id="3.40.50.300">
    <property type="entry name" value="P-loop containing nucleotide triphosphate hydrolases"/>
    <property type="match status" value="1"/>
</dbReference>
<dbReference type="Gene3D" id="3.30.40.10">
    <property type="entry name" value="Zinc/RING finger domain, C3HC4 (zinc finger)"/>
    <property type="match status" value="1"/>
</dbReference>
<dbReference type="InterPro" id="IPR030386">
    <property type="entry name" value="G_GB1_RHD3_dom"/>
</dbReference>
<dbReference type="InterPro" id="IPR015894">
    <property type="entry name" value="Guanylate-bd_N"/>
</dbReference>
<dbReference type="InterPro" id="IPR027417">
    <property type="entry name" value="P-loop_NTPase"/>
</dbReference>
<dbReference type="InterPro" id="IPR018957">
    <property type="entry name" value="Znf_C3HC4_RING-type"/>
</dbReference>
<dbReference type="InterPro" id="IPR001841">
    <property type="entry name" value="Znf_RING"/>
</dbReference>
<dbReference type="InterPro" id="IPR013083">
    <property type="entry name" value="Znf_RING/FYVE/PHD"/>
</dbReference>
<dbReference type="PANTHER" id="PTHR10751">
    <property type="entry name" value="GUANYLATE BINDING PROTEIN"/>
    <property type="match status" value="1"/>
</dbReference>
<dbReference type="Pfam" id="PF02263">
    <property type="entry name" value="GBP"/>
    <property type="match status" value="1"/>
</dbReference>
<dbReference type="Pfam" id="PF00097">
    <property type="entry name" value="zf-C3HC4"/>
    <property type="match status" value="1"/>
</dbReference>
<dbReference type="SMART" id="SM00184">
    <property type="entry name" value="RING"/>
    <property type="match status" value="1"/>
</dbReference>
<dbReference type="SUPFAM" id="SSF52540">
    <property type="entry name" value="P-loop containing nucleoside triphosphate hydrolases"/>
    <property type="match status" value="1"/>
</dbReference>
<dbReference type="SUPFAM" id="SSF57850">
    <property type="entry name" value="RING/U-box"/>
    <property type="match status" value="1"/>
</dbReference>
<dbReference type="PROSITE" id="PS51715">
    <property type="entry name" value="G_GB1_RHD3"/>
    <property type="match status" value="1"/>
</dbReference>
<dbReference type="PROSITE" id="PS50089">
    <property type="entry name" value="ZF_RING_2"/>
    <property type="match status" value="1"/>
</dbReference>
<feature type="chain" id="PRO_0000056302" description="RING finger protein 112">
    <location>
        <begin position="1"/>
        <end position="631"/>
    </location>
</feature>
<feature type="transmembrane region" description="Helical" evidence="2">
    <location>
        <begin position="547"/>
        <end position="567"/>
    </location>
</feature>
<feature type="transmembrane region" description="Helical" evidence="2">
    <location>
        <begin position="580"/>
        <end position="600"/>
    </location>
</feature>
<feature type="domain" description="GB1/RHD3-type G" evidence="4">
    <location>
        <begin position="166"/>
        <end position="397"/>
    </location>
</feature>
<feature type="zinc finger region" description="RING-type" evidence="3">
    <location>
        <begin position="57"/>
        <end position="98"/>
    </location>
</feature>
<feature type="region of interest" description="Interaction with ZBTB16" evidence="1">
    <location>
        <begin position="131"/>
        <end position="631"/>
    </location>
</feature>
<feature type="binding site" evidence="1">
    <location>
        <begin position="317"/>
        <end position="318"/>
    </location>
    <ligand>
        <name>GTP</name>
        <dbReference type="ChEBI" id="CHEBI:37565"/>
    </ligand>
</feature>
<comment type="function">
    <text evidence="1">E3 ubiquitin-protein ligase that plays an important role in neuronal differentiation, including neurogenesis and gliogenesis, during brain development. During embryonic development initiates neuronal differentiation by inducing cell cycle arrest at the G0/G1 phase through up-regulation of cell-cycle regulatory proteins. Plays a role not only in the fetal period during the development of the nervous system, but also in the adult brain, where it is involved in the maintenance of neural functions and protection of the nervous tissue cells from oxidative stress-induced damage. Exhibits GTPase and E3 ubiquitin-protein ligase activities. Regulates dendritic spine density and synaptic neurotransmission; its ability to hydrolyze GTP is involved in the maintenance of dendritic spine density.</text>
</comment>
<comment type="catalytic activity">
    <reaction evidence="5">
        <text>S-ubiquitinyl-[E2 ubiquitin-conjugating enzyme]-L-cysteine + [acceptor protein]-L-lysine = [E2 ubiquitin-conjugating enzyme]-L-cysteine + N(6)-ubiquitinyl-[acceptor protein]-L-lysine.</text>
        <dbReference type="EC" id="2.3.2.27"/>
    </reaction>
</comment>
<comment type="pathway">
    <text evidence="5">Protein modification; protein ubiquitination.</text>
</comment>
<comment type="subunit">
    <text evidence="1">Self-associates. Interacts with SP1 in an oxidative stress-regulated manner. Interacts with SIGMAR1 in an oxidative stress-regulated manner. Interacts with ZBTB16 (via C2H2-type zinc finger domains 1 and 2).</text>
</comment>
<comment type="subcellular location">
    <subcellularLocation>
        <location evidence="1">Membrane</location>
        <topology evidence="2">Multi-pass membrane protein</topology>
    </subcellularLocation>
    <subcellularLocation>
        <location evidence="1">Membrane</location>
        <topology evidence="1">Peripheral membrane protein</topology>
    </subcellularLocation>
    <subcellularLocation>
        <location evidence="1">Cytoplasm</location>
    </subcellularLocation>
    <subcellularLocation>
        <location evidence="1">Nucleus</location>
    </subcellularLocation>
    <subcellularLocation>
        <location evidence="1">Nucleus</location>
        <location evidence="1">Nuclear body</location>
    </subcellularLocation>
    <subcellularLocation>
        <location evidence="1">Nucleus</location>
        <location evidence="1">Nucleoplasm</location>
    </subcellularLocation>
    <subcellularLocation>
        <location evidence="1">Endosome</location>
    </subcellularLocation>
    <subcellularLocation>
        <location evidence="1">Cytoplasmic vesicle</location>
        <location evidence="1">Secretory vesicle</location>
        <location evidence="1">Synaptic vesicle</location>
    </subcellularLocation>
    <subcellularLocation>
        <location evidence="1">Postsynaptic density</location>
    </subcellularLocation>
    <subcellularLocation>
        <location evidence="1">Perikaryon</location>
    </subcellularLocation>
    <subcellularLocation>
        <location evidence="1">Cell projection</location>
        <location evidence="1">Neuron projection</location>
    </subcellularLocation>
    <text evidence="1">Predominantly in the nucleus, but some amounts were also found in the cytoplasm. Oxidative stress stimulates its shuttling from the cytoplasm into the nucleus. Recruited to nuclear bodies via its interaction with ZBTB16. Localizes to the cell soma and neuritis and only slightly to the nucleus in the neurons of most brain areas.</text>
</comment>
<comment type="tissue specificity">
    <text>Predominantly expressed in brain.</text>
</comment>
<comment type="PTM">
    <text evidence="1">Auto-ubiquitinated.</text>
</comment>
<comment type="similarity">
    <text evidence="4">Belongs to the TRAFAC class dynamin-like GTPase superfamily. GB1/RHD3 GTPase family. GB1 subfamily.</text>
</comment>